<gene>
    <name type="primary">acyP</name>
    <name type="ordered locus">SAV1404</name>
</gene>
<sequence length="89" mass="10160">MRHIHLQVFGRVQGVGFRYFTQRIAMNYNIVGTVQNVDDYVEIYAQGDDADIERFIQGVIEGASPASNVTSHQLEELELNQKLSDFRSI</sequence>
<keyword id="KW-0378">Hydrolase</keyword>
<reference key="1">
    <citation type="journal article" date="2001" name="Lancet">
        <title>Whole genome sequencing of meticillin-resistant Staphylococcus aureus.</title>
        <authorList>
            <person name="Kuroda M."/>
            <person name="Ohta T."/>
            <person name="Uchiyama I."/>
            <person name="Baba T."/>
            <person name="Yuzawa H."/>
            <person name="Kobayashi I."/>
            <person name="Cui L."/>
            <person name="Oguchi A."/>
            <person name="Aoki K."/>
            <person name="Nagai Y."/>
            <person name="Lian J.-Q."/>
            <person name="Ito T."/>
            <person name="Kanamori M."/>
            <person name="Matsumaru H."/>
            <person name="Maruyama A."/>
            <person name="Murakami H."/>
            <person name="Hosoyama A."/>
            <person name="Mizutani-Ui Y."/>
            <person name="Takahashi N.K."/>
            <person name="Sawano T."/>
            <person name="Inoue R."/>
            <person name="Kaito C."/>
            <person name="Sekimizu K."/>
            <person name="Hirakawa H."/>
            <person name="Kuhara S."/>
            <person name="Goto S."/>
            <person name="Yabuzaki J."/>
            <person name="Kanehisa M."/>
            <person name="Yamashita A."/>
            <person name="Oshima K."/>
            <person name="Furuya K."/>
            <person name="Yoshino C."/>
            <person name="Shiba T."/>
            <person name="Hattori M."/>
            <person name="Ogasawara N."/>
            <person name="Hayashi H."/>
            <person name="Hiramatsu K."/>
        </authorList>
    </citation>
    <scope>NUCLEOTIDE SEQUENCE [LARGE SCALE GENOMIC DNA]</scope>
    <source>
        <strain>Mu50 / ATCC 700699</strain>
    </source>
</reference>
<accession>Q99U83</accession>
<comment type="catalytic activity">
    <reaction>
        <text>an acyl phosphate + H2O = a carboxylate + phosphate + H(+)</text>
        <dbReference type="Rhea" id="RHEA:14965"/>
        <dbReference type="ChEBI" id="CHEBI:15377"/>
        <dbReference type="ChEBI" id="CHEBI:15378"/>
        <dbReference type="ChEBI" id="CHEBI:29067"/>
        <dbReference type="ChEBI" id="CHEBI:43474"/>
        <dbReference type="ChEBI" id="CHEBI:59918"/>
        <dbReference type="EC" id="3.6.1.7"/>
    </reaction>
</comment>
<comment type="similarity">
    <text evidence="2">Belongs to the acylphosphatase family.</text>
</comment>
<dbReference type="EC" id="3.6.1.7"/>
<dbReference type="EMBL" id="BA000017">
    <property type="protein sequence ID" value="BAB57566.1"/>
    <property type="molecule type" value="Genomic_DNA"/>
</dbReference>
<dbReference type="RefSeq" id="WP_001215907.1">
    <property type="nucleotide sequence ID" value="NC_002758.2"/>
</dbReference>
<dbReference type="SMR" id="Q99U83"/>
<dbReference type="KEGG" id="sav:SAV1404"/>
<dbReference type="HOGENOM" id="CLU_141932_2_1_9"/>
<dbReference type="PhylomeDB" id="Q99U83"/>
<dbReference type="Proteomes" id="UP000002481">
    <property type="component" value="Chromosome"/>
</dbReference>
<dbReference type="GO" id="GO:0003998">
    <property type="term" value="F:acylphosphatase activity"/>
    <property type="evidence" value="ECO:0007669"/>
    <property type="project" value="UniProtKB-EC"/>
</dbReference>
<dbReference type="GO" id="GO:0016743">
    <property type="term" value="F:carboxyl- or carbamoyltransferase activity"/>
    <property type="evidence" value="ECO:0007669"/>
    <property type="project" value="TreeGrafter"/>
</dbReference>
<dbReference type="GO" id="GO:0008270">
    <property type="term" value="F:zinc ion binding"/>
    <property type="evidence" value="ECO:0007669"/>
    <property type="project" value="TreeGrafter"/>
</dbReference>
<dbReference type="GO" id="GO:0051604">
    <property type="term" value="P:protein maturation"/>
    <property type="evidence" value="ECO:0007669"/>
    <property type="project" value="TreeGrafter"/>
</dbReference>
<dbReference type="Gene3D" id="3.30.70.100">
    <property type="match status" value="1"/>
</dbReference>
<dbReference type="InterPro" id="IPR001792">
    <property type="entry name" value="Acylphosphatase-like_dom"/>
</dbReference>
<dbReference type="InterPro" id="IPR036046">
    <property type="entry name" value="Acylphosphatase-like_dom_sf"/>
</dbReference>
<dbReference type="InterPro" id="IPR017968">
    <property type="entry name" value="Acylphosphatase_CS"/>
</dbReference>
<dbReference type="InterPro" id="IPR051060">
    <property type="entry name" value="Carbamoyltrans_HypF-like"/>
</dbReference>
<dbReference type="NCBIfam" id="NF011005">
    <property type="entry name" value="PRK14431.1"/>
    <property type="match status" value="1"/>
</dbReference>
<dbReference type="PANTHER" id="PTHR42959">
    <property type="entry name" value="CARBAMOYLTRANSFERASE"/>
    <property type="match status" value="1"/>
</dbReference>
<dbReference type="PANTHER" id="PTHR42959:SF1">
    <property type="entry name" value="CARBAMOYLTRANSFERASE HYPF"/>
    <property type="match status" value="1"/>
</dbReference>
<dbReference type="Pfam" id="PF00708">
    <property type="entry name" value="Acylphosphatase"/>
    <property type="match status" value="1"/>
</dbReference>
<dbReference type="SUPFAM" id="SSF54975">
    <property type="entry name" value="Acylphosphatase/BLUF domain-like"/>
    <property type="match status" value="1"/>
</dbReference>
<dbReference type="PROSITE" id="PS00150">
    <property type="entry name" value="ACYLPHOSPHATASE_1"/>
    <property type="match status" value="1"/>
</dbReference>
<dbReference type="PROSITE" id="PS51160">
    <property type="entry name" value="ACYLPHOSPHATASE_3"/>
    <property type="match status" value="1"/>
</dbReference>
<feature type="chain" id="PRO_0000326813" description="Acylphosphatase">
    <location>
        <begin position="1"/>
        <end position="89"/>
    </location>
</feature>
<feature type="domain" description="Acylphosphatase-like" evidence="1">
    <location>
        <begin position="3"/>
        <end position="89"/>
    </location>
</feature>
<feature type="active site" evidence="1">
    <location>
        <position position="18"/>
    </location>
</feature>
<feature type="active site" evidence="1">
    <location>
        <position position="36"/>
    </location>
</feature>
<name>ACYP_STAAM</name>
<organism>
    <name type="scientific">Staphylococcus aureus (strain Mu50 / ATCC 700699)</name>
    <dbReference type="NCBI Taxonomy" id="158878"/>
    <lineage>
        <taxon>Bacteria</taxon>
        <taxon>Bacillati</taxon>
        <taxon>Bacillota</taxon>
        <taxon>Bacilli</taxon>
        <taxon>Bacillales</taxon>
        <taxon>Staphylococcaceae</taxon>
        <taxon>Staphylococcus</taxon>
    </lineage>
</organism>
<proteinExistence type="inferred from homology"/>
<protein>
    <recommendedName>
        <fullName>Acylphosphatase</fullName>
        <ecNumber>3.6.1.7</ecNumber>
    </recommendedName>
    <alternativeName>
        <fullName>Acylphosphate phosphohydrolase</fullName>
    </alternativeName>
</protein>
<evidence type="ECO:0000255" key="1">
    <source>
        <dbReference type="PROSITE-ProRule" id="PRU00520"/>
    </source>
</evidence>
<evidence type="ECO:0000305" key="2"/>